<reference key="1">
    <citation type="journal article" date="2002" name="Proc. Natl. Acad. Sci. U.S.A.">
        <title>The complete genome sequence of Chlorobium tepidum TLS, a photosynthetic, anaerobic, green-sulfur bacterium.</title>
        <authorList>
            <person name="Eisen J.A."/>
            <person name="Nelson K.E."/>
            <person name="Paulsen I.T."/>
            <person name="Heidelberg J.F."/>
            <person name="Wu M."/>
            <person name="Dodson R.J."/>
            <person name="DeBoy R.T."/>
            <person name="Gwinn M.L."/>
            <person name="Nelson W.C."/>
            <person name="Haft D.H."/>
            <person name="Hickey E.K."/>
            <person name="Peterson J.D."/>
            <person name="Durkin A.S."/>
            <person name="Kolonay J.F."/>
            <person name="Yang F."/>
            <person name="Holt I.E."/>
            <person name="Umayam L.A."/>
            <person name="Mason T.M."/>
            <person name="Brenner M."/>
            <person name="Shea T.P."/>
            <person name="Parksey D.S."/>
            <person name="Nierman W.C."/>
            <person name="Feldblyum T.V."/>
            <person name="Hansen C.L."/>
            <person name="Craven M.B."/>
            <person name="Radune D."/>
            <person name="Vamathevan J.J."/>
            <person name="Khouri H.M."/>
            <person name="White O."/>
            <person name="Gruber T.M."/>
            <person name="Ketchum K.A."/>
            <person name="Venter J.C."/>
            <person name="Tettelin H."/>
            <person name="Bryant D.A."/>
            <person name="Fraser C.M."/>
        </authorList>
    </citation>
    <scope>NUCLEOTIDE SEQUENCE [LARGE SCALE GENOMIC DNA]</scope>
    <source>
        <strain>ATCC 49652 / DSM 12025 / NBRC 103806 / TLS</strain>
    </source>
</reference>
<proteinExistence type="inferred from homology"/>
<dbReference type="EC" id="6.3.2.8" evidence="1"/>
<dbReference type="EMBL" id="AE006470">
    <property type="protein sequence ID" value="AAM71281.1"/>
    <property type="molecule type" value="Genomic_DNA"/>
</dbReference>
<dbReference type="RefSeq" id="NP_660939.1">
    <property type="nucleotide sequence ID" value="NC_002932.3"/>
</dbReference>
<dbReference type="SMR" id="Q8KGD5"/>
<dbReference type="STRING" id="194439.CT0033"/>
<dbReference type="EnsemblBacteria" id="AAM71281">
    <property type="protein sequence ID" value="AAM71281"/>
    <property type="gene ID" value="CT0033"/>
</dbReference>
<dbReference type="KEGG" id="cte:CT0033"/>
<dbReference type="PATRIC" id="fig|194439.7.peg.32"/>
<dbReference type="eggNOG" id="COG0773">
    <property type="taxonomic scope" value="Bacteria"/>
</dbReference>
<dbReference type="HOGENOM" id="CLU_028104_2_2_10"/>
<dbReference type="OrthoDB" id="9804126at2"/>
<dbReference type="UniPathway" id="UPA00219"/>
<dbReference type="Proteomes" id="UP000001007">
    <property type="component" value="Chromosome"/>
</dbReference>
<dbReference type="GO" id="GO:0005737">
    <property type="term" value="C:cytoplasm"/>
    <property type="evidence" value="ECO:0007669"/>
    <property type="project" value="UniProtKB-SubCell"/>
</dbReference>
<dbReference type="GO" id="GO:0005524">
    <property type="term" value="F:ATP binding"/>
    <property type="evidence" value="ECO:0007669"/>
    <property type="project" value="UniProtKB-UniRule"/>
</dbReference>
<dbReference type="GO" id="GO:0008763">
    <property type="term" value="F:UDP-N-acetylmuramate-L-alanine ligase activity"/>
    <property type="evidence" value="ECO:0007669"/>
    <property type="project" value="UniProtKB-UniRule"/>
</dbReference>
<dbReference type="GO" id="GO:0051301">
    <property type="term" value="P:cell division"/>
    <property type="evidence" value="ECO:0007669"/>
    <property type="project" value="UniProtKB-KW"/>
</dbReference>
<dbReference type="GO" id="GO:0071555">
    <property type="term" value="P:cell wall organization"/>
    <property type="evidence" value="ECO:0007669"/>
    <property type="project" value="UniProtKB-KW"/>
</dbReference>
<dbReference type="GO" id="GO:0009252">
    <property type="term" value="P:peptidoglycan biosynthetic process"/>
    <property type="evidence" value="ECO:0007669"/>
    <property type="project" value="UniProtKB-UniRule"/>
</dbReference>
<dbReference type="GO" id="GO:0008360">
    <property type="term" value="P:regulation of cell shape"/>
    <property type="evidence" value="ECO:0007669"/>
    <property type="project" value="UniProtKB-KW"/>
</dbReference>
<dbReference type="Gene3D" id="3.90.190.20">
    <property type="entry name" value="Mur ligase, C-terminal domain"/>
    <property type="match status" value="1"/>
</dbReference>
<dbReference type="Gene3D" id="3.40.1190.10">
    <property type="entry name" value="Mur-like, catalytic domain"/>
    <property type="match status" value="1"/>
</dbReference>
<dbReference type="Gene3D" id="3.40.50.720">
    <property type="entry name" value="NAD(P)-binding Rossmann-like Domain"/>
    <property type="match status" value="1"/>
</dbReference>
<dbReference type="HAMAP" id="MF_00046">
    <property type="entry name" value="MurC"/>
    <property type="match status" value="1"/>
</dbReference>
<dbReference type="InterPro" id="IPR036565">
    <property type="entry name" value="Mur-like_cat_sf"/>
</dbReference>
<dbReference type="InterPro" id="IPR004101">
    <property type="entry name" value="Mur_ligase_C"/>
</dbReference>
<dbReference type="InterPro" id="IPR036615">
    <property type="entry name" value="Mur_ligase_C_dom_sf"/>
</dbReference>
<dbReference type="InterPro" id="IPR013221">
    <property type="entry name" value="Mur_ligase_cen"/>
</dbReference>
<dbReference type="InterPro" id="IPR000713">
    <property type="entry name" value="Mur_ligase_N"/>
</dbReference>
<dbReference type="InterPro" id="IPR050061">
    <property type="entry name" value="MurCDEF_pg_biosynth"/>
</dbReference>
<dbReference type="InterPro" id="IPR005758">
    <property type="entry name" value="UDP-N-AcMur_Ala_ligase_MurC"/>
</dbReference>
<dbReference type="NCBIfam" id="TIGR01082">
    <property type="entry name" value="murC"/>
    <property type="match status" value="1"/>
</dbReference>
<dbReference type="PANTHER" id="PTHR43445:SF3">
    <property type="entry name" value="UDP-N-ACETYLMURAMATE--L-ALANINE LIGASE"/>
    <property type="match status" value="1"/>
</dbReference>
<dbReference type="PANTHER" id="PTHR43445">
    <property type="entry name" value="UDP-N-ACETYLMURAMATE--L-ALANINE LIGASE-RELATED"/>
    <property type="match status" value="1"/>
</dbReference>
<dbReference type="Pfam" id="PF01225">
    <property type="entry name" value="Mur_ligase"/>
    <property type="match status" value="1"/>
</dbReference>
<dbReference type="Pfam" id="PF02875">
    <property type="entry name" value="Mur_ligase_C"/>
    <property type="match status" value="1"/>
</dbReference>
<dbReference type="Pfam" id="PF08245">
    <property type="entry name" value="Mur_ligase_M"/>
    <property type="match status" value="1"/>
</dbReference>
<dbReference type="SUPFAM" id="SSF51984">
    <property type="entry name" value="MurCD N-terminal domain"/>
    <property type="match status" value="1"/>
</dbReference>
<dbReference type="SUPFAM" id="SSF53623">
    <property type="entry name" value="MurD-like peptide ligases, catalytic domain"/>
    <property type="match status" value="1"/>
</dbReference>
<dbReference type="SUPFAM" id="SSF53244">
    <property type="entry name" value="MurD-like peptide ligases, peptide-binding domain"/>
    <property type="match status" value="1"/>
</dbReference>
<keyword id="KW-0067">ATP-binding</keyword>
<keyword id="KW-0131">Cell cycle</keyword>
<keyword id="KW-0132">Cell division</keyword>
<keyword id="KW-0133">Cell shape</keyword>
<keyword id="KW-0961">Cell wall biogenesis/degradation</keyword>
<keyword id="KW-0963">Cytoplasm</keyword>
<keyword id="KW-0436">Ligase</keyword>
<keyword id="KW-0547">Nucleotide-binding</keyword>
<keyword id="KW-0573">Peptidoglycan synthesis</keyword>
<keyword id="KW-1185">Reference proteome</keyword>
<feature type="chain" id="PRO_0000182077" description="UDP-N-acetylmuramate--L-alanine ligase">
    <location>
        <begin position="1"/>
        <end position="475"/>
    </location>
</feature>
<feature type="binding site" evidence="1">
    <location>
        <begin position="117"/>
        <end position="123"/>
    </location>
    <ligand>
        <name>ATP</name>
        <dbReference type="ChEBI" id="CHEBI:30616"/>
    </ligand>
</feature>
<protein>
    <recommendedName>
        <fullName evidence="1">UDP-N-acetylmuramate--L-alanine ligase</fullName>
        <ecNumber evidence="1">6.3.2.8</ecNumber>
    </recommendedName>
    <alternativeName>
        <fullName evidence="1">UDP-N-acetylmuramoyl-L-alanine synthetase</fullName>
    </alternativeName>
</protein>
<sequence length="475" mass="51465">MPPMELGKTKNVHIVGIGGAGMSAIAELLLKSGFAVSGSDLASGEVIDKLRELGAVIHQGHQAENVGASDVVVYSSAVRPESNVEILAAQKLGIPVIKRDEMLGELMRHKSGICVSGTHGKTTTTAMVATMLLEAGQSPTVMIGGVSDYLKGSTVVGEGKSMVIEADEYDRAFLKLTPTIAVLNSLESEHMDTYGTMDNLRDCFAEFANKVPFYGRVICCVDWPEIRRIIPRLNRRYTTFGIEEHADVMASEIEPGDGGSTFTVEAFGERYPGVRLNVPGRHNVLNALAAFSVGLEIGLPPERIIAGLARYSGMRRRFQVKYRGADGVLVIDDYAHHPTEVKATVRAARDGWKEHRIVAVFQPHLYSRTAEFAGEFGWALSRADTVYVAGIYPSREKAEDYPGITGELVAEASRTAGAKNVWFTEEHEALLAALQEEAAPETLFLFMGAGDITHLAARFAAWCTEMRSNADATAS</sequence>
<name>MURC_CHLTE</name>
<gene>
    <name evidence="1" type="primary">murC</name>
    <name type="ordered locus">CT0033</name>
</gene>
<organism>
    <name type="scientific">Chlorobaculum tepidum (strain ATCC 49652 / DSM 12025 / NBRC 103806 / TLS)</name>
    <name type="common">Chlorobium tepidum</name>
    <dbReference type="NCBI Taxonomy" id="194439"/>
    <lineage>
        <taxon>Bacteria</taxon>
        <taxon>Pseudomonadati</taxon>
        <taxon>Chlorobiota</taxon>
        <taxon>Chlorobiia</taxon>
        <taxon>Chlorobiales</taxon>
        <taxon>Chlorobiaceae</taxon>
        <taxon>Chlorobaculum</taxon>
    </lineage>
</organism>
<comment type="function">
    <text evidence="1">Cell wall formation.</text>
</comment>
<comment type="catalytic activity">
    <reaction evidence="1">
        <text>UDP-N-acetyl-alpha-D-muramate + L-alanine + ATP = UDP-N-acetyl-alpha-D-muramoyl-L-alanine + ADP + phosphate + H(+)</text>
        <dbReference type="Rhea" id="RHEA:23372"/>
        <dbReference type="ChEBI" id="CHEBI:15378"/>
        <dbReference type="ChEBI" id="CHEBI:30616"/>
        <dbReference type="ChEBI" id="CHEBI:43474"/>
        <dbReference type="ChEBI" id="CHEBI:57972"/>
        <dbReference type="ChEBI" id="CHEBI:70757"/>
        <dbReference type="ChEBI" id="CHEBI:83898"/>
        <dbReference type="ChEBI" id="CHEBI:456216"/>
        <dbReference type="EC" id="6.3.2.8"/>
    </reaction>
</comment>
<comment type="pathway">
    <text evidence="1">Cell wall biogenesis; peptidoglycan biosynthesis.</text>
</comment>
<comment type="subcellular location">
    <subcellularLocation>
        <location evidence="1">Cytoplasm</location>
    </subcellularLocation>
</comment>
<comment type="similarity">
    <text evidence="1">Belongs to the MurCDEF family.</text>
</comment>
<evidence type="ECO:0000255" key="1">
    <source>
        <dbReference type="HAMAP-Rule" id="MF_00046"/>
    </source>
</evidence>
<accession>Q8KGD5</accession>